<comment type="function">
    <text evidence="1">E3 ubiquitin-protein ligase which accepts ubiquitin from an E2 ubiquitin-conjugating enzyme in the form of a thioester and then directly transfers the ubiquitin to targeted substrates. Ubiquitinates BCKDK and targets it for degradation, thereby regulating various metabolic processes (By similarity). Involved in the positive regulation of neurite branching in hippocampal neurons and the control of neuronal spine number and morphology, through the ubiquitination of PPP3CC (By similarity).</text>
</comment>
<comment type="catalytic activity">
    <reaction>
        <text>S-ubiquitinyl-[E2 ubiquitin-conjugating enzyme]-L-cysteine + [acceptor protein]-L-lysine = [E2 ubiquitin-conjugating enzyme]-L-cysteine + N(6)-ubiquitinyl-[acceptor protein]-L-lysine.</text>
        <dbReference type="EC" id="2.3.2.26"/>
    </reaction>
</comment>
<comment type="pathway">
    <text>Protein modification; protein ubiquitination.</text>
</comment>
<comment type="interaction">
    <interactant intactId="EBI-4287135">
        <id>Q7Z3V4</id>
    </interactant>
    <interactant intactId="EBI-397435">
        <id>P62158</id>
        <label>CALM3</label>
    </interactant>
    <organismsDiffer>false</organismsDiffer>
    <experiments>2</experiments>
</comment>
<comment type="interaction">
    <interactant intactId="EBI-4287135">
        <id>Q7Z3V4</id>
    </interactant>
    <interactant intactId="EBI-1642165">
        <id>O14950</id>
        <label>MYL12B</label>
    </interactant>
    <organismsDiffer>false</organismsDiffer>
    <experiments>2</experiments>
</comment>
<comment type="subcellular location">
    <subcellularLocation>
        <location evidence="1">Postsynaptic density</location>
    </subcellularLocation>
</comment>
<comment type="alternative products">
    <event type="alternative splicing"/>
    <isoform>
        <id>Q7Z3V4-1</id>
        <name>1</name>
        <name>UBE3B_v1</name>
        <sequence type="displayed"/>
    </isoform>
    <isoform>
        <id>Q7Z3V4-2</id>
        <name>2</name>
        <name>UBE3B_v2</name>
        <sequence type="described" ref="VSP_024087 VSP_024088"/>
    </isoform>
    <isoform>
        <id>Q7Z3V4-3</id>
        <name>3</name>
        <sequence type="described" ref="VSP_024085 VSP_024086"/>
    </isoform>
</comment>
<comment type="tissue specificity">
    <text evidence="4">Widely expressed.</text>
</comment>
<comment type="disease" evidence="7 8 9 10 11 12">
    <disease id="DI-04406">
        <name>Kaufman oculocerebrofacial syndrome</name>
        <acronym>KOS</acronym>
        <description>A syndrome characterized by blepharophimosis, ptosis, mild upslanting of the palpebral fissures, epicanthus, ectodermal anomalies, developmental delay, and severe intellectual disability with absent speech. Proportionate growth retardation with a small head circumference/microcephaly, congenital malformations, muscular hypotonia, anomalies on brain imaging with hypoplasia of the corpus callosum, and low cholesterol levels are variably present.</description>
        <dbReference type="MIM" id="244450"/>
    </disease>
    <text>The disease is caused by variants affecting the gene represented in this entry.</text>
</comment>
<comment type="miscellaneous">
    <molecule>Isoform 1</molecule>
    <text>Major isoform.</text>
</comment>
<gene>
    <name type="primary">UBE3B</name>
</gene>
<protein>
    <recommendedName>
        <fullName>Ubiquitin-protein ligase E3B</fullName>
        <ecNumber>2.3.2.26</ecNumber>
    </recommendedName>
    <alternativeName>
        <fullName>HECT-type ubiquitin transferase E3B</fullName>
    </alternativeName>
</protein>
<name>UBE3B_HUMAN</name>
<evidence type="ECO:0000250" key="1">
    <source>
        <dbReference type="UniProtKB" id="Q9ES34"/>
    </source>
</evidence>
<evidence type="ECO:0000255" key="2">
    <source>
        <dbReference type="PROSITE-ProRule" id="PRU00104"/>
    </source>
</evidence>
<evidence type="ECO:0000255" key="3">
    <source>
        <dbReference type="PROSITE-ProRule" id="PRU00116"/>
    </source>
</evidence>
<evidence type="ECO:0000269" key="4">
    <source>
    </source>
</evidence>
<evidence type="ECO:0000269" key="5">
    <source>
    </source>
</evidence>
<evidence type="ECO:0000269" key="6">
    <source>
    </source>
</evidence>
<evidence type="ECO:0000269" key="7">
    <source>
    </source>
</evidence>
<evidence type="ECO:0000269" key="8">
    <source>
    </source>
</evidence>
<evidence type="ECO:0000269" key="9">
    <source>
    </source>
</evidence>
<evidence type="ECO:0000269" key="10">
    <source>
    </source>
</evidence>
<evidence type="ECO:0000269" key="11">
    <source>
    </source>
</evidence>
<evidence type="ECO:0000269" key="12">
    <source>
    </source>
</evidence>
<evidence type="ECO:0000303" key="13">
    <source>
    </source>
</evidence>
<evidence type="ECO:0000303" key="14">
    <source>
    </source>
</evidence>
<evidence type="ECO:0000303" key="15">
    <source>
    </source>
</evidence>
<evidence type="ECO:0000305" key="16"/>
<evidence type="ECO:0007744" key="17">
    <source>
    </source>
</evidence>
<evidence type="ECO:0007744" key="18">
    <source>
    </source>
</evidence>
<feature type="chain" id="PRO_0000281882" description="Ubiquitin-protein ligase E3B">
    <location>
        <begin position="1"/>
        <end position="1068"/>
    </location>
</feature>
<feature type="domain" description="IQ" evidence="3">
    <location>
        <begin position="29"/>
        <end position="58"/>
    </location>
</feature>
<feature type="domain" description="HECT" evidence="2">
    <location>
        <begin position="702"/>
        <end position="1068"/>
    </location>
</feature>
<feature type="active site" description="Glycyl thioester intermediate" evidence="2">
    <location>
        <position position="1036"/>
    </location>
</feature>
<feature type="modified residue" description="N-acetylmethionine" evidence="18">
    <location>
        <position position="1"/>
    </location>
</feature>
<feature type="modified residue" description="Phosphoserine" evidence="17">
    <location>
        <position position="419"/>
    </location>
</feature>
<feature type="splice variant" id="VSP_024085" description="In isoform 3." evidence="14">
    <original>ILLTRGLARPRPCLSKGTLTAAFSLALRPVIAAQ</original>
    <variation>CCDGLFPDLVSYAPHNNPVRWSVGRSWYDWQLSR</variation>
    <location>
        <begin position="211"/>
        <end position="244"/>
    </location>
</feature>
<feature type="splice variant" id="VSP_024086" description="In isoform 3." evidence="14">
    <location>
        <begin position="245"/>
        <end position="1068"/>
    </location>
</feature>
<feature type="splice variant" id="VSP_024087" description="In isoform 2." evidence="13 15">
    <original>DGYEQLRQLSQHAMKG</original>
    <variation>SLFECPWPLVINAESC</variation>
    <location>
        <begin position="693"/>
        <end position="708"/>
    </location>
</feature>
<feature type="splice variant" id="VSP_024088" description="In isoform 2." evidence="13 15">
    <location>
        <begin position="709"/>
        <end position="1068"/>
    </location>
</feature>
<feature type="sequence variant" id="VAR_089911" description="In KOS; likely pathogenic." evidence="9">
    <location>
        <begin position="21"/>
        <end position="1068"/>
    </location>
</feature>
<feature type="sequence variant" id="VAR_089912" description="In KOS; likely pathogenic." evidence="8">
    <location>
        <begin position="186"/>
        <end position="1068"/>
    </location>
</feature>
<feature type="sequence variant" id="VAR_031302" description="In dbSNP:rs7298565." evidence="5 6">
    <original>R</original>
    <variation>Q</variation>
    <location>
        <position position="346"/>
    </location>
</feature>
<feature type="sequence variant" id="VAR_089913" description="In KOS; likely pathogenic." evidence="8">
    <location>
        <begin position="389"/>
        <end position="1068"/>
    </location>
</feature>
<feature type="sequence variant" id="VAR_089914" description="In KOS; uncertain significance; associated in cis with P-539." evidence="9">
    <original>L</original>
    <variation>H</variation>
    <location>
        <position position="482"/>
    </location>
</feature>
<feature type="sequence variant" id="VAR_089915" description="In KOS; uncertain significance; associated in cis with H-482." evidence="9">
    <original>L</original>
    <variation>P</variation>
    <location>
        <position position="539"/>
    </location>
</feature>
<feature type="sequence variant" id="VAR_089916" description="In KOS; uncertain significance." evidence="12">
    <location>
        <position position="565"/>
    </location>
</feature>
<feature type="sequence variant" id="VAR_089938" description="In KOS; uncertain significance." evidence="10">
    <original>Q</original>
    <variation>R</variation>
    <location>
        <position position="642"/>
    </location>
</feature>
<feature type="sequence variant" id="VAR_089917" description="In KOS; likely pathogenic." evidence="9">
    <location>
        <begin position="700"/>
        <end position="1068"/>
    </location>
</feature>
<feature type="sequence variant" id="VAR_069712" description="In KOS; dbSNP:rs398123023." evidence="7">
    <original>Q</original>
    <variation>P</variation>
    <location>
        <position position="727"/>
    </location>
</feature>
<feature type="sequence variant" id="VAR_089918" description="In KOS; likely pathogenic; loss of positive regulation of neuron projection arborization; contrary to the wild type, it fails to rescue defective neurite branching in UBE3B-KO mouse primary hyppocampal neurons." evidence="9 11">
    <original>G</original>
    <variation>R</variation>
    <location>
        <position position="779"/>
    </location>
</feature>
<feature type="sequence variant" id="VAR_089939" description="In KOS; uncertain significance." evidence="10">
    <original>D</original>
    <variation>N</variation>
    <location>
        <position position="963"/>
    </location>
</feature>
<feature type="sequence variant" id="VAR_089919" description="In KOS; likely pathogenic." evidence="12">
    <original>P</original>
    <variation>L</variation>
    <location>
        <position position="992"/>
    </location>
</feature>
<feature type="sequence variant" id="VAR_089920" description="In KOS; likely pathogenic; loss of positive regulation of neuron projection arborization; contrary to the wild type, it fails to rescue defective neurite branching in UBE3B-KO mouse primary hyppocampal neurons." evidence="9 11">
    <original>R</original>
    <variation>P</variation>
    <location>
        <position position="997"/>
    </location>
</feature>
<feature type="sequence conflict" description="In Ref. 2; CAD97645." evidence="16" ref="2">
    <original>E</original>
    <variation>V</variation>
    <location>
        <position position="151"/>
    </location>
</feature>
<feature type="sequence conflict" description="In Ref. 2; CAD97645." evidence="16" ref="2">
    <original>I</original>
    <variation>V</variation>
    <location>
        <position position="907"/>
    </location>
</feature>
<feature type="sequence conflict" description="In Ref. 2; CAD97645." evidence="16" ref="2">
    <original>Y</original>
    <variation>H</variation>
    <location>
        <position position="942"/>
    </location>
</feature>
<feature type="sequence conflict" description="In Ref. 2; CAD97645." evidence="16" ref="2">
    <original>F</original>
    <variation>S</variation>
    <location>
        <position position="1018"/>
    </location>
</feature>
<dbReference type="EC" id="2.3.2.26"/>
<dbReference type="EMBL" id="AF251046">
    <property type="protein sequence ID" value="AAK28419.2"/>
    <property type="molecule type" value="mRNA"/>
</dbReference>
<dbReference type="EMBL" id="AL096740">
    <property type="protein sequence ID" value="CAH56410.1"/>
    <property type="molecule type" value="mRNA"/>
</dbReference>
<dbReference type="EMBL" id="BX537403">
    <property type="protein sequence ID" value="CAD97645.1"/>
    <property type="molecule type" value="mRNA"/>
</dbReference>
<dbReference type="EMBL" id="AC007570">
    <property type="status" value="NOT_ANNOTATED_CDS"/>
    <property type="molecule type" value="Genomic_DNA"/>
</dbReference>
<dbReference type="EMBL" id="BC032301">
    <property type="protein sequence ID" value="AAH32301.1"/>
    <property type="molecule type" value="mRNA"/>
</dbReference>
<dbReference type="EMBL" id="BC051266">
    <property type="protein sequence ID" value="AAH51266.1"/>
    <property type="molecule type" value="mRNA"/>
</dbReference>
<dbReference type="EMBL" id="BC068221">
    <property type="protein sequence ID" value="AAH68221.1"/>
    <property type="molecule type" value="mRNA"/>
</dbReference>
<dbReference type="EMBL" id="BC108705">
    <property type="protein sequence ID" value="AAI08706.1"/>
    <property type="molecule type" value="mRNA"/>
</dbReference>
<dbReference type="EMBL" id="BC141880">
    <property type="protein sequence ID" value="AAI41881.1"/>
    <property type="molecule type" value="mRNA"/>
</dbReference>
<dbReference type="CCDS" id="CCDS58277.1">
    <molecule id="Q7Z3V4-3"/>
</dbReference>
<dbReference type="CCDS" id="CCDS9129.1">
    <molecule id="Q7Z3V4-1"/>
</dbReference>
<dbReference type="RefSeq" id="NP_001257378.1">
    <molecule id="Q7Z3V4-3"/>
    <property type="nucleotide sequence ID" value="NM_001270449.2"/>
</dbReference>
<dbReference type="RefSeq" id="NP_001257379.1">
    <molecule id="Q7Z3V4-3"/>
    <property type="nucleotide sequence ID" value="NM_001270450.2"/>
</dbReference>
<dbReference type="RefSeq" id="NP_001257380.1">
    <molecule id="Q7Z3V4-3"/>
    <property type="nucleotide sequence ID" value="NM_001270451.2"/>
</dbReference>
<dbReference type="RefSeq" id="NP_569733.2">
    <molecule id="Q7Z3V4-1"/>
    <property type="nucleotide sequence ID" value="NM_130466.3"/>
</dbReference>
<dbReference type="RefSeq" id="NP_904324.1">
    <molecule id="Q7Z3V4-1"/>
    <property type="nucleotide sequence ID" value="NM_183415.3"/>
</dbReference>
<dbReference type="RefSeq" id="XP_005254044.1">
    <molecule id="Q7Z3V4-1"/>
    <property type="nucleotide sequence ID" value="XM_005253987.3"/>
</dbReference>
<dbReference type="RefSeq" id="XP_011537261.1">
    <molecule id="Q7Z3V4-1"/>
    <property type="nucleotide sequence ID" value="XM_011538959.3"/>
</dbReference>
<dbReference type="RefSeq" id="XP_016875685.1">
    <molecule id="Q7Z3V4-3"/>
    <property type="nucleotide sequence ID" value="XM_017020196.2"/>
</dbReference>
<dbReference type="RefSeq" id="XP_054229756.1">
    <molecule id="Q7Z3V4-3"/>
    <property type="nucleotide sequence ID" value="XM_054373781.1"/>
</dbReference>
<dbReference type="SMR" id="Q7Z3V4"/>
<dbReference type="BioGRID" id="124642">
    <property type="interactions" value="59"/>
</dbReference>
<dbReference type="FunCoup" id="Q7Z3V4">
    <property type="interactions" value="1982"/>
</dbReference>
<dbReference type="IntAct" id="Q7Z3V4">
    <property type="interactions" value="35"/>
</dbReference>
<dbReference type="MINT" id="Q7Z3V4"/>
<dbReference type="STRING" id="9606.ENSP00000340596"/>
<dbReference type="iPTMnet" id="Q7Z3V4"/>
<dbReference type="PhosphoSitePlus" id="Q7Z3V4"/>
<dbReference type="BioMuta" id="UBE3B"/>
<dbReference type="DMDM" id="296453010"/>
<dbReference type="jPOST" id="Q7Z3V4"/>
<dbReference type="MassIVE" id="Q7Z3V4"/>
<dbReference type="PaxDb" id="9606-ENSP00000340596"/>
<dbReference type="PeptideAtlas" id="Q7Z3V4"/>
<dbReference type="ProteomicsDB" id="69089">
    <molecule id="Q7Z3V4-1"/>
</dbReference>
<dbReference type="ProteomicsDB" id="69090">
    <molecule id="Q7Z3V4-2"/>
</dbReference>
<dbReference type="ProteomicsDB" id="69091">
    <molecule id="Q7Z3V4-3"/>
</dbReference>
<dbReference type="Pumba" id="Q7Z3V4"/>
<dbReference type="Antibodypedia" id="30872">
    <property type="antibodies" value="82 antibodies from 19 providers"/>
</dbReference>
<dbReference type="DNASU" id="89910"/>
<dbReference type="Ensembl" id="ENST00000340074.9">
    <molecule id="Q7Z3V4-3"/>
    <property type="protein sequence ID" value="ENSP00000342614.5"/>
    <property type="gene ID" value="ENSG00000151148.14"/>
</dbReference>
<dbReference type="Ensembl" id="ENST00000342494.8">
    <molecule id="Q7Z3V4-1"/>
    <property type="protein sequence ID" value="ENSP00000340596.3"/>
    <property type="gene ID" value="ENSG00000151148.14"/>
</dbReference>
<dbReference type="Ensembl" id="ENST00000434735.6">
    <molecule id="Q7Z3V4-1"/>
    <property type="protein sequence ID" value="ENSP00000391529.2"/>
    <property type="gene ID" value="ENSG00000151148.14"/>
</dbReference>
<dbReference type="Ensembl" id="ENST00000449510.6">
    <molecule id="Q7Z3V4-2"/>
    <property type="protein sequence ID" value="ENSP00000395802.2"/>
    <property type="gene ID" value="ENSG00000151148.14"/>
</dbReference>
<dbReference type="Ensembl" id="ENST00000536398.5">
    <molecule id="Q7Z3V4-3"/>
    <property type="protein sequence ID" value="ENSP00000440585.1"/>
    <property type="gene ID" value="ENSG00000151148.14"/>
</dbReference>
<dbReference type="Ensembl" id="ENST00000540230.5">
    <molecule id="Q7Z3V4-3"/>
    <property type="protein sequence ID" value="ENSP00000443565.1"/>
    <property type="gene ID" value="ENSG00000151148.14"/>
</dbReference>
<dbReference type="GeneID" id="89910"/>
<dbReference type="KEGG" id="hsa:89910"/>
<dbReference type="MANE-Select" id="ENST00000342494.8">
    <property type="protein sequence ID" value="ENSP00000340596.3"/>
    <property type="RefSeq nucleotide sequence ID" value="NM_130466.4"/>
    <property type="RefSeq protein sequence ID" value="NP_569733.2"/>
</dbReference>
<dbReference type="UCSC" id="uc001tom.5">
    <molecule id="Q7Z3V4-1"/>
    <property type="organism name" value="human"/>
</dbReference>
<dbReference type="AGR" id="HGNC:13478"/>
<dbReference type="CTD" id="89910"/>
<dbReference type="DisGeNET" id="89910"/>
<dbReference type="GeneCards" id="UBE3B"/>
<dbReference type="GeneReviews" id="UBE3B"/>
<dbReference type="HGNC" id="HGNC:13478">
    <property type="gene designation" value="UBE3B"/>
</dbReference>
<dbReference type="HPA" id="ENSG00000151148">
    <property type="expression patterns" value="Low tissue specificity"/>
</dbReference>
<dbReference type="MalaCards" id="UBE3B"/>
<dbReference type="MIM" id="244450">
    <property type="type" value="phenotype"/>
</dbReference>
<dbReference type="MIM" id="608047">
    <property type="type" value="gene"/>
</dbReference>
<dbReference type="neXtProt" id="NX_Q7Z3V4"/>
<dbReference type="OpenTargets" id="ENSG00000151148"/>
<dbReference type="Orphanet" id="2707">
    <property type="disease" value="Oculocerebrofacial syndrome, Kaufman type"/>
</dbReference>
<dbReference type="PharmGKB" id="PA134872189"/>
<dbReference type="VEuPathDB" id="HostDB:ENSG00000151148"/>
<dbReference type="eggNOG" id="KOG4427">
    <property type="taxonomic scope" value="Eukaryota"/>
</dbReference>
<dbReference type="GeneTree" id="ENSGT00940000156548"/>
<dbReference type="HOGENOM" id="CLU_002173_2_0_1"/>
<dbReference type="InParanoid" id="Q7Z3V4"/>
<dbReference type="OMA" id="NTKCTAP"/>
<dbReference type="OrthoDB" id="8068875at2759"/>
<dbReference type="PAN-GO" id="Q7Z3V4">
    <property type="GO annotations" value="3 GO annotations based on evolutionary models"/>
</dbReference>
<dbReference type="PhylomeDB" id="Q7Z3V4"/>
<dbReference type="TreeFam" id="TF313215"/>
<dbReference type="BRENDA" id="2.3.2.26">
    <property type="organism ID" value="2681"/>
</dbReference>
<dbReference type="BRENDA" id="2.3.2.B11">
    <property type="organism ID" value="2681"/>
</dbReference>
<dbReference type="PathwayCommons" id="Q7Z3V4"/>
<dbReference type="Reactome" id="R-HSA-983168">
    <property type="pathway name" value="Antigen processing: Ubiquitination &amp; Proteasome degradation"/>
</dbReference>
<dbReference type="SignaLink" id="Q7Z3V4"/>
<dbReference type="SIGNOR" id="Q7Z3V4"/>
<dbReference type="UniPathway" id="UPA00143"/>
<dbReference type="BioGRID-ORCS" id="89910">
    <property type="hits" value="11 hits in 1201 CRISPR screens"/>
</dbReference>
<dbReference type="ChiTaRS" id="UBE3B">
    <property type="organism name" value="human"/>
</dbReference>
<dbReference type="GenomeRNAi" id="89910"/>
<dbReference type="Pharos" id="Q7Z3V4">
    <property type="development level" value="Tbio"/>
</dbReference>
<dbReference type="PRO" id="PR:Q7Z3V4"/>
<dbReference type="Proteomes" id="UP000005640">
    <property type="component" value="Chromosome 12"/>
</dbReference>
<dbReference type="RNAct" id="Q7Z3V4">
    <property type="molecule type" value="protein"/>
</dbReference>
<dbReference type="Bgee" id="ENSG00000151148">
    <property type="expression patterns" value="Expressed in oocyte and 201 other cell types or tissues"/>
</dbReference>
<dbReference type="ExpressionAtlas" id="Q7Z3V4">
    <property type="expression patterns" value="baseline and differential"/>
</dbReference>
<dbReference type="GO" id="GO:0098978">
    <property type="term" value="C:glutamatergic synapse"/>
    <property type="evidence" value="ECO:0007669"/>
    <property type="project" value="Ensembl"/>
</dbReference>
<dbReference type="GO" id="GO:0005739">
    <property type="term" value="C:mitochondrion"/>
    <property type="evidence" value="ECO:0000314"/>
    <property type="project" value="FlyBase"/>
</dbReference>
<dbReference type="GO" id="GO:0014069">
    <property type="term" value="C:postsynaptic density"/>
    <property type="evidence" value="ECO:0007669"/>
    <property type="project" value="UniProtKB-SubCell"/>
</dbReference>
<dbReference type="GO" id="GO:0061630">
    <property type="term" value="F:ubiquitin protein ligase activity"/>
    <property type="evidence" value="ECO:0000314"/>
    <property type="project" value="FlyBase"/>
</dbReference>
<dbReference type="GO" id="GO:0000209">
    <property type="term" value="P:protein polyubiquitination"/>
    <property type="evidence" value="ECO:0000318"/>
    <property type="project" value="GO_Central"/>
</dbReference>
<dbReference type="GO" id="GO:0150052">
    <property type="term" value="P:regulation of postsynapse assembly"/>
    <property type="evidence" value="ECO:0007669"/>
    <property type="project" value="Ensembl"/>
</dbReference>
<dbReference type="GO" id="GO:0006511">
    <property type="term" value="P:ubiquitin-dependent protein catabolic process"/>
    <property type="evidence" value="ECO:0000318"/>
    <property type="project" value="GO_Central"/>
</dbReference>
<dbReference type="CDD" id="cd00078">
    <property type="entry name" value="HECTc"/>
    <property type="match status" value="1"/>
</dbReference>
<dbReference type="FunFam" id="3.30.2160.10:FF:000002">
    <property type="entry name" value="Putative Ubiquitin-protein ligase E3C"/>
    <property type="match status" value="1"/>
</dbReference>
<dbReference type="FunFam" id="3.30.2410.10:FF:000012">
    <property type="entry name" value="Ubiquitin-protein ligase E3B"/>
    <property type="match status" value="1"/>
</dbReference>
<dbReference type="Gene3D" id="3.30.2160.10">
    <property type="entry name" value="Hect, E3 ligase catalytic domain"/>
    <property type="match status" value="1"/>
</dbReference>
<dbReference type="Gene3D" id="3.30.2410.10">
    <property type="entry name" value="Hect, E3 ligase catalytic domain"/>
    <property type="match status" value="1"/>
</dbReference>
<dbReference type="Gene3D" id="3.90.1750.10">
    <property type="entry name" value="Hect, E3 ligase catalytic domains"/>
    <property type="match status" value="1"/>
</dbReference>
<dbReference type="InterPro" id="IPR044611">
    <property type="entry name" value="E3A/B/C-like"/>
</dbReference>
<dbReference type="InterPro" id="IPR000569">
    <property type="entry name" value="HECT_dom"/>
</dbReference>
<dbReference type="InterPro" id="IPR035983">
    <property type="entry name" value="Hect_E3_ubiquitin_ligase"/>
</dbReference>
<dbReference type="InterPro" id="IPR000048">
    <property type="entry name" value="IQ_motif_EF-hand-BS"/>
</dbReference>
<dbReference type="PANTHER" id="PTHR45700:SF3">
    <property type="entry name" value="UBIQUITIN-PROTEIN LIGASE E3B"/>
    <property type="match status" value="1"/>
</dbReference>
<dbReference type="PANTHER" id="PTHR45700">
    <property type="entry name" value="UBIQUITIN-PROTEIN LIGASE E3C"/>
    <property type="match status" value="1"/>
</dbReference>
<dbReference type="Pfam" id="PF00632">
    <property type="entry name" value="HECT"/>
    <property type="match status" value="1"/>
</dbReference>
<dbReference type="SMART" id="SM00119">
    <property type="entry name" value="HECTc"/>
    <property type="match status" value="1"/>
</dbReference>
<dbReference type="SMART" id="SM00015">
    <property type="entry name" value="IQ"/>
    <property type="match status" value="1"/>
</dbReference>
<dbReference type="SUPFAM" id="SSF56204">
    <property type="entry name" value="Hect, E3 ligase catalytic domain"/>
    <property type="match status" value="1"/>
</dbReference>
<dbReference type="PROSITE" id="PS50237">
    <property type="entry name" value="HECT"/>
    <property type="match status" value="1"/>
</dbReference>
<dbReference type="PROSITE" id="PS50096">
    <property type="entry name" value="IQ"/>
    <property type="match status" value="1"/>
</dbReference>
<proteinExistence type="evidence at protein level"/>
<keyword id="KW-0007">Acetylation</keyword>
<keyword id="KW-0025">Alternative splicing</keyword>
<keyword id="KW-0225">Disease variant</keyword>
<keyword id="KW-0991">Intellectual disability</keyword>
<keyword id="KW-0597">Phosphoprotein</keyword>
<keyword id="KW-1267">Proteomics identification</keyword>
<keyword id="KW-1185">Reference proteome</keyword>
<keyword id="KW-0770">Synapse</keyword>
<keyword id="KW-0808">Transferase</keyword>
<keyword id="KW-0833">Ubl conjugation pathway</keyword>
<organism>
    <name type="scientific">Homo sapiens</name>
    <name type="common">Human</name>
    <dbReference type="NCBI Taxonomy" id="9606"/>
    <lineage>
        <taxon>Eukaryota</taxon>
        <taxon>Metazoa</taxon>
        <taxon>Chordata</taxon>
        <taxon>Craniata</taxon>
        <taxon>Vertebrata</taxon>
        <taxon>Euteleostomi</taxon>
        <taxon>Mammalia</taxon>
        <taxon>Eutheria</taxon>
        <taxon>Euarchontoglires</taxon>
        <taxon>Primates</taxon>
        <taxon>Haplorrhini</taxon>
        <taxon>Catarrhini</taxon>
        <taxon>Hominidae</taxon>
        <taxon>Homo</taxon>
    </lineage>
</organism>
<sequence>MFTLSQTSRAWFIDRARQAREERLVQKERERAAVVIQAHVRSFLCRSRLQRDIRREIDDFFKADDPESTKRSALCIFKIARKLLFLFRIKEDNERFEKLCRSILSSMDAENEPKVWYVSLACSKDLTLLWIQQIKNILWYCCDFLKQLKPEILQDSRLITLYLTMLVTFTDTSTWKILRGKGESLRPAMNHICANIMGHLNQHGFYSVLQILLTRGLARPRPCLSKGTLTAAFSLALRPVIAAQFSDNLIRPFLIHIMSVPALVTHLSTVTPERLTVLESHDMLRKFIIFLRDQDRCRDVCESLEGCHTLCLMGNLLHLGSLSPRVLEEETDGFVSLLTQTLCYCRKYVSQKKSNLTHWHPVLGWFSQSVDYGLNESMHLITKQLQFLWGVPLIRIFFCDILSKKLLESQEPAHAQPASPQNVLPVKSLLKRAFQKSASVRNILRPVGGKRVDSAEVQKVCNICVLYQTSLTTLTQIRLQILTGLTYLDDLLPKLWAFICELGPHGGLKLFLECLNNDTEESKQLLAMLMLFCDCSRHLITILDDIEVYEEQISFKLEELVTISSFLNSFVFKMIWDGIVENAKGETLELFQSVHGWLMVLYERDCRRRFTPEDHWLRKDLKPSVLFQELDRDRKRAQLILQYIPHVIPHKNRVLLFRTMVTKEKEKLGLVETSSASPHVTHITIRRSRMLEDGYEQLRQLSQHAMKGVIRVKFVNDLGVDEAGIDQDGVFKEFLEEIIKRVFDPALNLFKTTSGDERLYPSPTSYIHENYLQLFEFVGKMLGKAVYEGIVVDVPFASFFLSQLLGHHHSVFYSSVDELPSLDSEFYKNLTSIKRYDGDITDLGLTLSYDEDVMGQLVCHELIPGGKTIPVTNENKISYIHLMAHFRMHTQIKNQTAALISGFRSIIKPEWIRMFSTPELQRLISGDNAEIDLEDLKKHTVYYGGFHGSHRVIIWLWDILASDFTPDERAMFLKFVTSCSRPPLLGFAYLKPPFSIRCVEVSDDQDTGDTLGSVLRGFFTIRKREPGGRLPTSSTCFNLLKLPNYSKKSVLREKLRYAISMNTGFELS</sequence>
<reference key="1">
    <citation type="journal article" date="2003" name="Genomics">
        <title>Characterization of the human UBE3B gene: structure, expression, evolution, and alternative splicing.</title>
        <authorList>
            <person name="Gong T.-W.L."/>
            <person name="Huang L."/>
            <person name="Warner S.J."/>
            <person name="Lomax M.I."/>
        </authorList>
    </citation>
    <scope>NUCLEOTIDE SEQUENCE [MRNA] (ISOFORMS 1 AND 2)</scope>
    <scope>TISSUE SPECIFICITY</scope>
</reference>
<reference key="2">
    <citation type="journal article" date="2007" name="BMC Genomics">
        <title>The full-ORF clone resource of the German cDNA consortium.</title>
        <authorList>
            <person name="Bechtel S."/>
            <person name="Rosenfelder H."/>
            <person name="Duda A."/>
            <person name="Schmidt C.P."/>
            <person name="Ernst U."/>
            <person name="Wellenreuther R."/>
            <person name="Mehrle A."/>
            <person name="Schuster C."/>
            <person name="Bahr A."/>
            <person name="Bloecker H."/>
            <person name="Heubner D."/>
            <person name="Hoerlein A."/>
            <person name="Michel G."/>
            <person name="Wedler H."/>
            <person name="Koehrer K."/>
            <person name="Ottenwaelder B."/>
            <person name="Poustka A."/>
            <person name="Wiemann S."/>
            <person name="Schupp I."/>
        </authorList>
    </citation>
    <scope>NUCLEOTIDE SEQUENCE [LARGE SCALE MRNA] (ISOFORMS 1 AND 2)</scope>
    <scope>VARIANT GLN-346</scope>
    <source>
        <tissue>Endometrial adenocarcinoma</tissue>
    </source>
</reference>
<reference key="3">
    <citation type="journal article" date="2006" name="Nature">
        <title>The finished DNA sequence of human chromosome 12.</title>
        <authorList>
            <person name="Scherer S.E."/>
            <person name="Muzny D.M."/>
            <person name="Buhay C.J."/>
            <person name="Chen R."/>
            <person name="Cree A."/>
            <person name="Ding Y."/>
            <person name="Dugan-Rocha S."/>
            <person name="Gill R."/>
            <person name="Gunaratne P."/>
            <person name="Harris R.A."/>
            <person name="Hawes A.C."/>
            <person name="Hernandez J."/>
            <person name="Hodgson A.V."/>
            <person name="Hume J."/>
            <person name="Jackson A."/>
            <person name="Khan Z.M."/>
            <person name="Kovar-Smith C."/>
            <person name="Lewis L.R."/>
            <person name="Lozado R.J."/>
            <person name="Metzker M.L."/>
            <person name="Milosavljevic A."/>
            <person name="Miner G.R."/>
            <person name="Montgomery K.T."/>
            <person name="Morgan M.B."/>
            <person name="Nazareth L.V."/>
            <person name="Scott G."/>
            <person name="Sodergren E."/>
            <person name="Song X.-Z."/>
            <person name="Steffen D."/>
            <person name="Lovering R.C."/>
            <person name="Wheeler D.A."/>
            <person name="Worley K.C."/>
            <person name="Yuan Y."/>
            <person name="Zhang Z."/>
            <person name="Adams C.Q."/>
            <person name="Ansari-Lari M.A."/>
            <person name="Ayele M."/>
            <person name="Brown M.J."/>
            <person name="Chen G."/>
            <person name="Chen Z."/>
            <person name="Clerc-Blankenburg K.P."/>
            <person name="Davis C."/>
            <person name="Delgado O."/>
            <person name="Dinh H.H."/>
            <person name="Draper H."/>
            <person name="Gonzalez-Garay M.L."/>
            <person name="Havlak P."/>
            <person name="Jackson L.R."/>
            <person name="Jacob L.S."/>
            <person name="Kelly S.H."/>
            <person name="Li L."/>
            <person name="Li Z."/>
            <person name="Liu J."/>
            <person name="Liu W."/>
            <person name="Lu J."/>
            <person name="Maheshwari M."/>
            <person name="Nguyen B.-V."/>
            <person name="Okwuonu G.O."/>
            <person name="Pasternak S."/>
            <person name="Perez L.M."/>
            <person name="Plopper F.J.H."/>
            <person name="Santibanez J."/>
            <person name="Shen H."/>
            <person name="Tabor P.E."/>
            <person name="Verduzco D."/>
            <person name="Waldron L."/>
            <person name="Wang Q."/>
            <person name="Williams G.A."/>
            <person name="Zhang J."/>
            <person name="Zhou J."/>
            <person name="Allen C.C."/>
            <person name="Amin A.G."/>
            <person name="Anyalebechi V."/>
            <person name="Bailey M."/>
            <person name="Barbaria J.A."/>
            <person name="Bimage K.E."/>
            <person name="Bryant N.P."/>
            <person name="Burch P.E."/>
            <person name="Burkett C.E."/>
            <person name="Burrell K.L."/>
            <person name="Calderon E."/>
            <person name="Cardenas V."/>
            <person name="Carter K."/>
            <person name="Casias K."/>
            <person name="Cavazos I."/>
            <person name="Cavazos S.R."/>
            <person name="Ceasar H."/>
            <person name="Chacko J."/>
            <person name="Chan S.N."/>
            <person name="Chavez D."/>
            <person name="Christopoulos C."/>
            <person name="Chu J."/>
            <person name="Cockrell R."/>
            <person name="Cox C.D."/>
            <person name="Dang M."/>
            <person name="Dathorne S.R."/>
            <person name="David R."/>
            <person name="Davis C.M."/>
            <person name="Davy-Carroll L."/>
            <person name="Deshazo D.R."/>
            <person name="Donlin J.E."/>
            <person name="D'Souza L."/>
            <person name="Eaves K.A."/>
            <person name="Egan A."/>
            <person name="Emery-Cohen A.J."/>
            <person name="Escotto M."/>
            <person name="Flagg N."/>
            <person name="Forbes L.D."/>
            <person name="Gabisi A.M."/>
            <person name="Garza M."/>
            <person name="Hamilton C."/>
            <person name="Henderson N."/>
            <person name="Hernandez O."/>
            <person name="Hines S."/>
            <person name="Hogues M.E."/>
            <person name="Huang M."/>
            <person name="Idlebird D.G."/>
            <person name="Johnson R."/>
            <person name="Jolivet A."/>
            <person name="Jones S."/>
            <person name="Kagan R."/>
            <person name="King L.M."/>
            <person name="Leal B."/>
            <person name="Lebow H."/>
            <person name="Lee S."/>
            <person name="LeVan J.M."/>
            <person name="Lewis L.C."/>
            <person name="London P."/>
            <person name="Lorensuhewa L.M."/>
            <person name="Loulseged H."/>
            <person name="Lovett D.A."/>
            <person name="Lucier A."/>
            <person name="Lucier R.L."/>
            <person name="Ma J."/>
            <person name="Madu R.C."/>
            <person name="Mapua P."/>
            <person name="Martindale A.D."/>
            <person name="Martinez E."/>
            <person name="Massey E."/>
            <person name="Mawhiney S."/>
            <person name="Meador M.G."/>
            <person name="Mendez S."/>
            <person name="Mercado C."/>
            <person name="Mercado I.C."/>
            <person name="Merritt C.E."/>
            <person name="Miner Z.L."/>
            <person name="Minja E."/>
            <person name="Mitchell T."/>
            <person name="Mohabbat F."/>
            <person name="Mohabbat K."/>
            <person name="Montgomery B."/>
            <person name="Moore N."/>
            <person name="Morris S."/>
            <person name="Munidasa M."/>
            <person name="Ngo R.N."/>
            <person name="Nguyen N.B."/>
            <person name="Nickerson E."/>
            <person name="Nwaokelemeh O.O."/>
            <person name="Nwokenkwo S."/>
            <person name="Obregon M."/>
            <person name="Oguh M."/>
            <person name="Oragunye N."/>
            <person name="Oviedo R.J."/>
            <person name="Parish B.J."/>
            <person name="Parker D.N."/>
            <person name="Parrish J."/>
            <person name="Parks K.L."/>
            <person name="Paul H.A."/>
            <person name="Payton B.A."/>
            <person name="Perez A."/>
            <person name="Perrin W."/>
            <person name="Pickens A."/>
            <person name="Primus E.L."/>
            <person name="Pu L.-L."/>
            <person name="Puazo M."/>
            <person name="Quiles M.M."/>
            <person name="Quiroz J.B."/>
            <person name="Rabata D."/>
            <person name="Reeves K."/>
            <person name="Ruiz S.J."/>
            <person name="Shao H."/>
            <person name="Sisson I."/>
            <person name="Sonaike T."/>
            <person name="Sorelle R.P."/>
            <person name="Sutton A.E."/>
            <person name="Svatek A.F."/>
            <person name="Svetz L.A."/>
            <person name="Tamerisa K.S."/>
            <person name="Taylor T.R."/>
            <person name="Teague B."/>
            <person name="Thomas N."/>
            <person name="Thorn R.D."/>
            <person name="Trejos Z.Y."/>
            <person name="Trevino B.K."/>
            <person name="Ukegbu O.N."/>
            <person name="Urban J.B."/>
            <person name="Vasquez L.I."/>
            <person name="Vera V.A."/>
            <person name="Villasana D.M."/>
            <person name="Wang L."/>
            <person name="Ward-Moore S."/>
            <person name="Warren J.T."/>
            <person name="Wei X."/>
            <person name="White F."/>
            <person name="Williamson A.L."/>
            <person name="Wleczyk R."/>
            <person name="Wooden H.S."/>
            <person name="Wooden S.H."/>
            <person name="Yen J."/>
            <person name="Yoon L."/>
            <person name="Yoon V."/>
            <person name="Zorrilla S.E."/>
            <person name="Nelson D."/>
            <person name="Kucherlapati R."/>
            <person name="Weinstock G."/>
            <person name="Gibbs R.A."/>
        </authorList>
    </citation>
    <scope>NUCLEOTIDE SEQUENCE [LARGE SCALE GENOMIC DNA]</scope>
</reference>
<reference key="4">
    <citation type="journal article" date="2004" name="Genome Res.">
        <title>The status, quality, and expansion of the NIH full-length cDNA project: the Mammalian Gene Collection (MGC).</title>
        <authorList>
            <consortium name="The MGC Project Team"/>
        </authorList>
    </citation>
    <scope>NUCLEOTIDE SEQUENCE [LARGE SCALE MRNA] (ISOFORMS 1 AND 3)</scope>
    <scope>VARIANT GLN-346</scope>
    <source>
        <tissue>Brain</tissue>
        <tissue>Lung</tissue>
        <tissue>Prostate</tissue>
        <tissue>Skin</tissue>
    </source>
</reference>
<reference key="5">
    <citation type="journal article" date="2008" name="Mol. Cell">
        <title>Kinase-selective enrichment enables quantitative phosphoproteomics of the kinome across the cell cycle.</title>
        <authorList>
            <person name="Daub H."/>
            <person name="Olsen J.V."/>
            <person name="Bairlein M."/>
            <person name="Gnad F."/>
            <person name="Oppermann F.S."/>
            <person name="Korner R."/>
            <person name="Greff Z."/>
            <person name="Keri G."/>
            <person name="Stemmann O."/>
            <person name="Mann M."/>
        </authorList>
    </citation>
    <scope>PHOSPHORYLATION [LARGE SCALE ANALYSIS] AT SER-419</scope>
    <scope>IDENTIFICATION BY MASS SPECTROMETRY [LARGE SCALE ANALYSIS]</scope>
    <source>
        <tissue>Cervix carcinoma</tissue>
    </source>
</reference>
<reference key="6">
    <citation type="journal article" date="2012" name="Proc. Natl. Acad. Sci. U.S.A.">
        <title>N-terminal acetylome analyses and functional insights of the N-terminal acetyltransferase NatB.</title>
        <authorList>
            <person name="Van Damme P."/>
            <person name="Lasa M."/>
            <person name="Polevoda B."/>
            <person name="Gazquez C."/>
            <person name="Elosegui-Artola A."/>
            <person name="Kim D.S."/>
            <person name="De Juan-Pardo E."/>
            <person name="Demeyer K."/>
            <person name="Hole K."/>
            <person name="Larrea E."/>
            <person name="Timmerman E."/>
            <person name="Prieto J."/>
            <person name="Arnesen T."/>
            <person name="Sherman F."/>
            <person name="Gevaert K."/>
            <person name="Aldabe R."/>
        </authorList>
    </citation>
    <scope>ACETYLATION [LARGE SCALE ANALYSIS] AT MET-1</scope>
    <scope>IDENTIFICATION BY MASS SPECTROMETRY [LARGE SCALE ANALYSIS]</scope>
</reference>
<reference key="7">
    <citation type="journal article" date="2012" name="Am. J. Hum. Genet.">
        <title>Deficiency for the ubiquitin ligase UBE3B in a blepharophimosis-ptosis-intellectual-disability syndrome.</title>
        <authorList>
            <person name="Basel-Vanagaite L."/>
            <person name="Dallapiccola B."/>
            <person name="Ramirez-Solis R."/>
            <person name="Segref A."/>
            <person name="Thiele H."/>
            <person name="Edwards A."/>
            <person name="Arends M.J."/>
            <person name="Miro X."/>
            <person name="White J.K."/>
            <person name="Desir J."/>
            <person name="Abramowicz M."/>
            <person name="Dentici M.L."/>
            <person name="Lepri F."/>
            <person name="Hofmann K."/>
            <person name="Har-Zahav A."/>
            <person name="Ryder E."/>
            <person name="Karp N.A."/>
            <person name="Estabel J."/>
            <person name="Gerdin A.K."/>
            <person name="Podrini C."/>
            <person name="Ingham N.J."/>
            <person name="Altmueller J."/>
            <person name="Nuernberg G."/>
            <person name="Frommolt P."/>
            <person name="Abdelhak S."/>
            <person name="Pasmanik-Chor M."/>
            <person name="Konen O."/>
            <person name="Kelley R.I."/>
            <person name="Shohat M."/>
            <person name="Nuernberg P."/>
            <person name="Flint J."/>
            <person name="Steel K.P."/>
            <person name="Hoppe T."/>
            <person name="Kubisch C."/>
            <person name="Adams D.J."/>
            <person name="Borck G."/>
        </authorList>
    </citation>
    <scope>VARIANT KOS PRO-727</scope>
    <scope>INVOLVEMENT IN KOS</scope>
</reference>
<reference key="8">
    <citation type="journal article" date="2013" name="J. Med. Genet.">
        <title>Loss of function of the E3 ubiquitin-protein ligase UBE3B causes Kaufman oculocerebrofacial syndrome.</title>
        <authorList>
            <person name="Flex E."/>
            <person name="Ciolfi A."/>
            <person name="Caputo V."/>
            <person name="Fodale V."/>
            <person name="Leoni C."/>
            <person name="Melis D."/>
            <person name="Bedeschi M.F."/>
            <person name="Mazzanti L."/>
            <person name="Pizzuti A."/>
            <person name="Tartaglia M."/>
            <person name="Zampino G."/>
        </authorList>
    </citation>
    <scope>VARIANTS KOS 186-ARG--SER-1068 DEL AND 389-TRP--SER-1068 DEL</scope>
    <scope>INVOLVEMENT IN KOS</scope>
</reference>
<reference key="9">
    <citation type="journal article" date="2014" name="Hum. Genet.">
        <title>Expanding the clinical and mutational spectrum of Kaufman oculocerebrofacial syndrome with biallelic UBE3B mutations.</title>
        <authorList>
            <person name="Basel-Vanagaite L."/>
            <person name="Yilmaz R."/>
            <person name="Tang S."/>
            <person name="Reuter M.S."/>
            <person name="Rahner N."/>
            <person name="Grange D.K."/>
            <person name="Mortenson M."/>
            <person name="Koty P."/>
            <person name="Feenstra H."/>
            <person name="Farwell Gonzalez K.D."/>
            <person name="Sticht H."/>
            <person name="Boddaert N."/>
            <person name="Desir J."/>
            <person name="Anyane-Yeboa K."/>
            <person name="Zweier C."/>
            <person name="Reis A."/>
            <person name="Kubisch C."/>
            <person name="Jewett T."/>
            <person name="Zeng W."/>
            <person name="Borck G."/>
        </authorList>
    </citation>
    <scope>VARIANTS KOS 21-GLU--SER-1068 DEL; HIS-482; PRO-539; 700-GLN--SER-1068 DEL; ARG-779 AND PRO-997</scope>
    <scope>INVOLVEMENT IN KOS</scope>
</reference>
<reference key="10">
    <citation type="journal article" date="2019" name="Proc. Natl. Acad. Sci. U.S.A.">
        <title>The ubiquitin ligase UBE3B, disrupted in intellectual disability and absent speech, regulates metabolic pathways by targeting BCKDK.</title>
        <authorList>
            <person name="Cheon S."/>
            <person name="Kaur K."/>
            <person name="Nijem N."/>
            <person name="Tuncay I.O."/>
            <person name="Kumar P."/>
            <person name="Dean M."/>
            <person name="Juusola J."/>
            <person name="Guillen-Sacoto M.J."/>
            <person name="Bedoukian E."/>
            <person name="Ierardi-Curto L."/>
            <person name="Kaplan P."/>
            <person name="Schaefer G.B."/>
            <person name="Mishra P."/>
            <person name="Chahrour M.H."/>
        </authorList>
    </citation>
    <scope>VARIANTS KOS ARG-642 AND ASN-963</scope>
</reference>
<reference key="11">
    <citation type="journal article" date="2021" name="Mol. Psychiatry">
        <title>The murine ortholog of Kaufman oculocerebrofacial syndrome protein Ube3b regulates synapse number by ubiquitinating Ppp3cc.</title>
        <authorList>
            <person name="Ambrozkiewicz M.C."/>
            <person name="Borisova E."/>
            <person name="Schwark M."/>
            <person name="Ripamonti S."/>
            <person name="Schaub T."/>
            <person name="Smorodchenko A."/>
            <person name="Weber A.I."/>
            <person name="Rhee H.J."/>
            <person name="Altas B."/>
            <person name="Yilmaz R."/>
            <person name="Mueller S."/>
            <person name="Piepkorn L."/>
            <person name="Horan S.T."/>
            <person name="Straussberg R."/>
            <person name="Zaqout S."/>
            <person name="Jahn O."/>
            <person name="Dere E."/>
            <person name="Rosario M."/>
            <person name="Boehm-Sturm P."/>
            <person name="Borck G."/>
            <person name="Willig K.I."/>
            <person name="Rhee J."/>
            <person name="Tarabykin V."/>
            <person name="Kawabe H."/>
        </authorList>
    </citation>
    <scope>CHARACTERIZATION OF VARIANTS KOS ARG-779 AND PRO-997</scope>
</reference>
<reference key="12">
    <citation type="journal article" date="2024" name="Clin. Dysmorphol.">
        <title>Novel UBE3B mutations: report of eight patients with Kaufman oculocerebrofacial syndrome with additional clinical findings from a highly consanguineous population.</title>
        <authorList>
            <person name="Albakheet A."/>
            <person name="Almuallami D."/>
            <person name="Almass R."/>
            <person name="Qari A."/>
            <person name="Kenana R."/>
            <person name="AlQudairy H."/>
            <person name="Huma R."/>
            <person name="Binomar H."/>
            <person name="Wakil S.M."/>
            <person name="Alowain M."/>
            <person name="Colak D."/>
            <person name="Kaya N."/>
            <person name="AlSayed M.D."/>
        </authorList>
    </citation>
    <scope>VARIANTS KOS SER-565 DEL AND LEU-992</scope>
    <scope>INVOLVEMENT IN KOS</scope>
</reference>
<accession>Q7Z3V4</accession>
<accession>A5D8Z3</accession>
<accession>Q05BX9</accession>
<accession>Q659F7</accession>
<accession>Q7Z7Q1</accession>
<accession>Q9BXZ4</accession>